<name>LRC8E_HUMAN</name>
<sequence length="796" mass="90247">MIPVAEFKQFTEQQPAFKVLKPWWDVLAEYLTVAMLMIGVFGCTLQVTQDKIICLPNHELQENLSEAPCQQLLPRGIPEQIGALQEVKGLKNNLDLQQYSFINQLCYETALHWYAKYFPYLVVIHTLIFMVCTSFWFKFPGTSSKIEHFISILGKCFDSPWTTRALSEVSGENQKGPAATERAAATIVAMAGTGPGKAGEGEKEKVLAEPEKVVTEPPVVTLLDKKEGEQAKALFEKVKKFRMHVEEGDILYTMYIRQTVLKVCKFLAILVYNLVYVEKISFLVACRVETSEVTGYASFCCNHTKAHLFSKLAFCYISFVCIYGLTCIYTLYWLFHRPLKEYSFRSVREETGMGDIPDVKNDFAFMLHLIDQYDSLYSKRFAVFLSEVSESRLKQLNLNHEWTPEKLRQKLQRNAAGRLELALCMLPGLPDTVFELSEVESLRLEAICDITFPPGLSQLVHLQELSLLHSPARLPFSLQVFLRDHLKVMRVKCEELREVPLWVFGLRGLEELHLEGLFPQELARAATLESLRELKQLKVLSLRSNAGKVPASVTDVAGHLQRLSLHNDGARLVALNSLKKLAALRELELVACGLERIPHAVFSLGALQELDLKDNHLRSIEEILSFQHCRKLVTLRLWHNQIAYVPEHVRKLRSLEQLYLSYNKLETLPSQLGLCSGLRLLDVSHNGLHSLPPEVGLLQNLQHLALSYNALEALPEELFFCRKLRTLLLGDNQLSQLSPHVGALRALSRLELKGNRLEALPEELGNCGGLKKAGLLVEDTLYQGLPAEVRDKMEEE</sequence>
<reference key="1">
    <citation type="journal article" date="2004" name="Nat. Genet.">
        <title>Complete sequencing and characterization of 21,243 full-length human cDNAs.</title>
        <authorList>
            <person name="Ota T."/>
            <person name="Suzuki Y."/>
            <person name="Nishikawa T."/>
            <person name="Otsuki T."/>
            <person name="Sugiyama T."/>
            <person name="Irie R."/>
            <person name="Wakamatsu A."/>
            <person name="Hayashi K."/>
            <person name="Sato H."/>
            <person name="Nagai K."/>
            <person name="Kimura K."/>
            <person name="Makita H."/>
            <person name="Sekine M."/>
            <person name="Obayashi M."/>
            <person name="Nishi T."/>
            <person name="Shibahara T."/>
            <person name="Tanaka T."/>
            <person name="Ishii S."/>
            <person name="Yamamoto J."/>
            <person name="Saito K."/>
            <person name="Kawai Y."/>
            <person name="Isono Y."/>
            <person name="Nakamura Y."/>
            <person name="Nagahari K."/>
            <person name="Murakami K."/>
            <person name="Yasuda T."/>
            <person name="Iwayanagi T."/>
            <person name="Wagatsuma M."/>
            <person name="Shiratori A."/>
            <person name="Sudo H."/>
            <person name="Hosoiri T."/>
            <person name="Kaku Y."/>
            <person name="Kodaira H."/>
            <person name="Kondo H."/>
            <person name="Sugawara M."/>
            <person name="Takahashi M."/>
            <person name="Kanda K."/>
            <person name="Yokoi T."/>
            <person name="Furuya T."/>
            <person name="Kikkawa E."/>
            <person name="Omura Y."/>
            <person name="Abe K."/>
            <person name="Kamihara K."/>
            <person name="Katsuta N."/>
            <person name="Sato K."/>
            <person name="Tanikawa M."/>
            <person name="Yamazaki M."/>
            <person name="Ninomiya K."/>
            <person name="Ishibashi T."/>
            <person name="Yamashita H."/>
            <person name="Murakawa K."/>
            <person name="Fujimori K."/>
            <person name="Tanai H."/>
            <person name="Kimata M."/>
            <person name="Watanabe M."/>
            <person name="Hiraoka S."/>
            <person name="Chiba Y."/>
            <person name="Ishida S."/>
            <person name="Ono Y."/>
            <person name="Takiguchi S."/>
            <person name="Watanabe S."/>
            <person name="Yosida M."/>
            <person name="Hotuta T."/>
            <person name="Kusano J."/>
            <person name="Kanehori K."/>
            <person name="Takahashi-Fujii A."/>
            <person name="Hara H."/>
            <person name="Tanase T.-O."/>
            <person name="Nomura Y."/>
            <person name="Togiya S."/>
            <person name="Komai F."/>
            <person name="Hara R."/>
            <person name="Takeuchi K."/>
            <person name="Arita M."/>
            <person name="Imose N."/>
            <person name="Musashino K."/>
            <person name="Yuuki H."/>
            <person name="Oshima A."/>
            <person name="Sasaki N."/>
            <person name="Aotsuka S."/>
            <person name="Yoshikawa Y."/>
            <person name="Matsunawa H."/>
            <person name="Ichihara T."/>
            <person name="Shiohata N."/>
            <person name="Sano S."/>
            <person name="Moriya S."/>
            <person name="Momiyama H."/>
            <person name="Satoh N."/>
            <person name="Takami S."/>
            <person name="Terashima Y."/>
            <person name="Suzuki O."/>
            <person name="Nakagawa S."/>
            <person name="Senoh A."/>
            <person name="Mizoguchi H."/>
            <person name="Goto Y."/>
            <person name="Shimizu F."/>
            <person name="Wakebe H."/>
            <person name="Hishigaki H."/>
            <person name="Watanabe T."/>
            <person name="Sugiyama A."/>
            <person name="Takemoto M."/>
            <person name="Kawakami B."/>
            <person name="Yamazaki M."/>
            <person name="Watanabe K."/>
            <person name="Kumagai A."/>
            <person name="Itakura S."/>
            <person name="Fukuzumi Y."/>
            <person name="Fujimori Y."/>
            <person name="Komiyama M."/>
            <person name="Tashiro H."/>
            <person name="Tanigami A."/>
            <person name="Fujiwara T."/>
            <person name="Ono T."/>
            <person name="Yamada K."/>
            <person name="Fujii Y."/>
            <person name="Ozaki K."/>
            <person name="Hirao M."/>
            <person name="Ohmori Y."/>
            <person name="Kawabata A."/>
            <person name="Hikiji T."/>
            <person name="Kobatake N."/>
            <person name="Inagaki H."/>
            <person name="Ikema Y."/>
            <person name="Okamoto S."/>
            <person name="Okitani R."/>
            <person name="Kawakami T."/>
            <person name="Noguchi S."/>
            <person name="Itoh T."/>
            <person name="Shigeta K."/>
            <person name="Senba T."/>
            <person name="Matsumura K."/>
            <person name="Nakajima Y."/>
            <person name="Mizuno T."/>
            <person name="Morinaga M."/>
            <person name="Sasaki M."/>
            <person name="Togashi T."/>
            <person name="Oyama M."/>
            <person name="Hata H."/>
            <person name="Watanabe M."/>
            <person name="Komatsu T."/>
            <person name="Mizushima-Sugano J."/>
            <person name="Satoh T."/>
            <person name="Shirai Y."/>
            <person name="Takahashi Y."/>
            <person name="Nakagawa K."/>
            <person name="Okumura K."/>
            <person name="Nagase T."/>
            <person name="Nomura N."/>
            <person name="Kikuchi H."/>
            <person name="Masuho Y."/>
            <person name="Yamashita R."/>
            <person name="Nakai K."/>
            <person name="Yada T."/>
            <person name="Nakamura Y."/>
            <person name="Ohara O."/>
            <person name="Isogai T."/>
            <person name="Sugano S."/>
        </authorList>
    </citation>
    <scope>NUCLEOTIDE SEQUENCE [LARGE SCALE MRNA]</scope>
    <source>
        <tissue>Tongue</tissue>
    </source>
</reference>
<reference key="2">
    <citation type="journal article" date="2007" name="BMC Genomics">
        <title>The full-ORF clone resource of the German cDNA consortium.</title>
        <authorList>
            <person name="Bechtel S."/>
            <person name="Rosenfelder H."/>
            <person name="Duda A."/>
            <person name="Schmidt C.P."/>
            <person name="Ernst U."/>
            <person name="Wellenreuther R."/>
            <person name="Mehrle A."/>
            <person name="Schuster C."/>
            <person name="Bahr A."/>
            <person name="Bloecker H."/>
            <person name="Heubner D."/>
            <person name="Hoerlein A."/>
            <person name="Michel G."/>
            <person name="Wedler H."/>
            <person name="Koehrer K."/>
            <person name="Ottenwaelder B."/>
            <person name="Poustka A."/>
            <person name="Wiemann S."/>
            <person name="Schupp I."/>
        </authorList>
    </citation>
    <scope>NUCLEOTIDE SEQUENCE [LARGE SCALE MRNA]</scope>
    <scope>VARIANT THR-190</scope>
    <source>
        <tissue>Esophageal carcinoma</tissue>
        <tissue>Melanoma</tissue>
    </source>
</reference>
<reference key="3">
    <citation type="journal article" date="2004" name="Nature">
        <title>The DNA sequence and biology of human chromosome 19.</title>
        <authorList>
            <person name="Grimwood J."/>
            <person name="Gordon L.A."/>
            <person name="Olsen A.S."/>
            <person name="Terry A."/>
            <person name="Schmutz J."/>
            <person name="Lamerdin J.E."/>
            <person name="Hellsten U."/>
            <person name="Goodstein D."/>
            <person name="Couronne O."/>
            <person name="Tran-Gyamfi M."/>
            <person name="Aerts A."/>
            <person name="Altherr M."/>
            <person name="Ashworth L."/>
            <person name="Bajorek E."/>
            <person name="Black S."/>
            <person name="Branscomb E."/>
            <person name="Caenepeel S."/>
            <person name="Carrano A.V."/>
            <person name="Caoile C."/>
            <person name="Chan Y.M."/>
            <person name="Christensen M."/>
            <person name="Cleland C.A."/>
            <person name="Copeland A."/>
            <person name="Dalin E."/>
            <person name="Dehal P."/>
            <person name="Denys M."/>
            <person name="Detter J.C."/>
            <person name="Escobar J."/>
            <person name="Flowers D."/>
            <person name="Fotopulos D."/>
            <person name="Garcia C."/>
            <person name="Georgescu A.M."/>
            <person name="Glavina T."/>
            <person name="Gomez M."/>
            <person name="Gonzales E."/>
            <person name="Groza M."/>
            <person name="Hammon N."/>
            <person name="Hawkins T."/>
            <person name="Haydu L."/>
            <person name="Ho I."/>
            <person name="Huang W."/>
            <person name="Israni S."/>
            <person name="Jett J."/>
            <person name="Kadner K."/>
            <person name="Kimball H."/>
            <person name="Kobayashi A."/>
            <person name="Larionov V."/>
            <person name="Leem S.-H."/>
            <person name="Lopez F."/>
            <person name="Lou Y."/>
            <person name="Lowry S."/>
            <person name="Malfatti S."/>
            <person name="Martinez D."/>
            <person name="McCready P.M."/>
            <person name="Medina C."/>
            <person name="Morgan J."/>
            <person name="Nelson K."/>
            <person name="Nolan M."/>
            <person name="Ovcharenko I."/>
            <person name="Pitluck S."/>
            <person name="Pollard M."/>
            <person name="Popkie A.P."/>
            <person name="Predki P."/>
            <person name="Quan G."/>
            <person name="Ramirez L."/>
            <person name="Rash S."/>
            <person name="Retterer J."/>
            <person name="Rodriguez A."/>
            <person name="Rogers S."/>
            <person name="Salamov A."/>
            <person name="Salazar A."/>
            <person name="She X."/>
            <person name="Smith D."/>
            <person name="Slezak T."/>
            <person name="Solovyev V."/>
            <person name="Thayer N."/>
            <person name="Tice H."/>
            <person name="Tsai M."/>
            <person name="Ustaszewska A."/>
            <person name="Vo N."/>
            <person name="Wagner M."/>
            <person name="Wheeler J."/>
            <person name="Wu K."/>
            <person name="Xie G."/>
            <person name="Yang J."/>
            <person name="Dubchak I."/>
            <person name="Furey T.S."/>
            <person name="DeJong P."/>
            <person name="Dickson M."/>
            <person name="Gordon D."/>
            <person name="Eichler E.E."/>
            <person name="Pennacchio L.A."/>
            <person name="Richardson P."/>
            <person name="Stubbs L."/>
            <person name="Rokhsar D.S."/>
            <person name="Myers R.M."/>
            <person name="Rubin E.M."/>
            <person name="Lucas S.M."/>
        </authorList>
    </citation>
    <scope>NUCLEOTIDE SEQUENCE [LARGE SCALE GENOMIC DNA]</scope>
</reference>
<reference key="4">
    <citation type="submission" date="2005-09" db="EMBL/GenBank/DDBJ databases">
        <authorList>
            <person name="Mural R.J."/>
            <person name="Istrail S."/>
            <person name="Sutton G.G."/>
            <person name="Florea L."/>
            <person name="Halpern A.L."/>
            <person name="Mobarry C.M."/>
            <person name="Lippert R."/>
            <person name="Walenz B."/>
            <person name="Shatkay H."/>
            <person name="Dew I."/>
            <person name="Miller J.R."/>
            <person name="Flanigan M.J."/>
            <person name="Edwards N.J."/>
            <person name="Bolanos R."/>
            <person name="Fasulo D."/>
            <person name="Halldorsson B.V."/>
            <person name="Hannenhalli S."/>
            <person name="Turner R."/>
            <person name="Yooseph S."/>
            <person name="Lu F."/>
            <person name="Nusskern D.R."/>
            <person name="Shue B.C."/>
            <person name="Zheng X.H."/>
            <person name="Zhong F."/>
            <person name="Delcher A.L."/>
            <person name="Huson D.H."/>
            <person name="Kravitz S.A."/>
            <person name="Mouchard L."/>
            <person name="Reinert K."/>
            <person name="Remington K.A."/>
            <person name="Clark A.G."/>
            <person name="Waterman M.S."/>
            <person name="Eichler E.E."/>
            <person name="Adams M.D."/>
            <person name="Hunkapiller M.W."/>
            <person name="Myers E.W."/>
            <person name="Venter J.C."/>
        </authorList>
    </citation>
    <scope>NUCLEOTIDE SEQUENCE [LARGE SCALE GENOMIC DNA]</scope>
</reference>
<reference key="5">
    <citation type="journal article" date="2004" name="Genome Res.">
        <title>The status, quality, and expansion of the NIH full-length cDNA project: the Mammalian Gene Collection (MGC).</title>
        <authorList>
            <consortium name="The MGC Project Team"/>
        </authorList>
    </citation>
    <scope>NUCLEOTIDE SEQUENCE [LARGE SCALE MRNA]</scope>
    <source>
        <tissue>Kidney</tissue>
        <tissue>Lung</tissue>
        <tissue>Placenta</tissue>
    </source>
</reference>
<reference key="6">
    <citation type="journal article" date="2012" name="Bioessays">
        <title>LRRC8 proteins share a common ancestor with pannexins, and may form hexameric channels involved in cell-cell communication.</title>
        <authorList>
            <person name="Abascal F."/>
            <person name="Zardoya R."/>
        </authorList>
    </citation>
    <scope>IDENTIFICATION</scope>
</reference>
<reference key="7">
    <citation type="journal article" date="2014" name="Science">
        <title>Identification of LRRC8 heteromers as an essential component of the volume-regulated anion channel VRAC.</title>
        <authorList>
            <person name="Voss F.K."/>
            <person name="Ullrich F."/>
            <person name="Muench J."/>
            <person name="Lazarow K."/>
            <person name="Lutter D."/>
            <person name="Mah N."/>
            <person name="Andrade-Navarro M.A."/>
            <person name="von Kries J.P."/>
            <person name="Stauber T."/>
            <person name="Jentsch T.J."/>
        </authorList>
    </citation>
    <scope>FUNCTION</scope>
    <scope>TRANSPORTER ACTIVITY</scope>
    <scope>INTERACTION WITH LRRC8A</scope>
    <scope>SUBCELLULAR LOCATION</scope>
</reference>
<reference key="8">
    <citation type="journal article" date="2016" name="Cell">
        <title>LRRC8 proteins form volume-regulated anion channels that sense ionic strength.</title>
        <authorList>
            <person name="Syeda R."/>
            <person name="Qiu Z."/>
            <person name="Dubin A.E."/>
            <person name="Murthy S.E."/>
            <person name="Florendo M.N."/>
            <person name="Mason D.E."/>
            <person name="Mathur J."/>
            <person name="Cahalan S.M."/>
            <person name="Peters E.C."/>
            <person name="Montal M."/>
            <person name="Patapoutian A."/>
        </authorList>
    </citation>
    <scope>FUNCTION</scope>
    <scope>SUBCELLULAR LOCATION</scope>
    <scope>SUBUNIT</scope>
    <scope>IDENTIFICATION BY MASS SPECTROMETRY</scope>
    <scope>MUTAGENESIS OF THR-44</scope>
</reference>
<reference key="9">
    <citation type="journal article" date="2017" name="J. Cell Sci.">
        <title>Selective transport of neurotransmitters and modulators by distinct volume-regulated LRRC8 anion channels.</title>
        <authorList>
            <person name="Lutter D."/>
            <person name="Ullrich F."/>
            <person name="Lueck J.C."/>
            <person name="Kempa S."/>
            <person name="Jentsch T.J."/>
        </authorList>
    </citation>
    <scope>FUNCTION</scope>
    <scope>SUBUNIT</scope>
    <scope>SUBCELLULAR LOCATION</scope>
</reference>
<reference key="10">
    <citation type="journal article" date="2020" name="Mol. Cell">
        <title>LRRC8A:C/E heteromeric channels are ubiquitous transporters of cGAMP.</title>
        <authorList>
            <person name="Lahey L.J."/>
            <person name="Mardjuki R.E."/>
            <person name="Wen X."/>
            <person name="Hess G.T."/>
            <person name="Ritchie C."/>
            <person name="Carozza J.A."/>
            <person name="Boehnert V."/>
            <person name="Maduke M."/>
            <person name="Bassik M.C."/>
            <person name="Li L."/>
        </authorList>
    </citation>
    <scope>FUNCTION</scope>
    <scope>TRANSPORTER ACTIVITY</scope>
</reference>
<reference key="11">
    <citation type="journal article" date="2020" name="Proc. Natl. Acad. Sci. U.S.A.">
        <title>LRRC8 family proteins within lysosomes regulate cellular osmoregulation and enhance cell survival to multiple physiological stresses.</title>
        <authorList>
            <person name="Li P."/>
            <person name="Hu M."/>
            <person name="Wang C."/>
            <person name="Feng X."/>
            <person name="Zhao Z."/>
            <person name="Yang Y."/>
            <person name="Sahoo N."/>
            <person name="Gu M."/>
            <person name="Yang Y."/>
            <person name="Xiao S."/>
            <person name="Sah R."/>
            <person name="Cover T.L."/>
            <person name="Chou J."/>
            <person name="Geha R."/>
            <person name="Benavides F."/>
            <person name="Hume R.I."/>
            <person name="Xu H."/>
        </authorList>
    </citation>
    <scope>FUNCTION</scope>
    <scope>SUBCELLULAR LOCATION</scope>
</reference>
<organism>
    <name type="scientific">Homo sapiens</name>
    <name type="common">Human</name>
    <dbReference type="NCBI Taxonomy" id="9606"/>
    <lineage>
        <taxon>Eukaryota</taxon>
        <taxon>Metazoa</taxon>
        <taxon>Chordata</taxon>
        <taxon>Craniata</taxon>
        <taxon>Vertebrata</taxon>
        <taxon>Euteleostomi</taxon>
        <taxon>Mammalia</taxon>
        <taxon>Eutheria</taxon>
        <taxon>Euarchontoglires</taxon>
        <taxon>Primates</taxon>
        <taxon>Haplorrhini</taxon>
        <taxon>Catarrhini</taxon>
        <taxon>Hominidae</taxon>
        <taxon>Homo</taxon>
    </lineage>
</organism>
<feature type="chain" id="PRO_0000076250" description="Volume-regulated anion channel subunit LRRC8E">
    <location>
        <begin position="1"/>
        <end position="796"/>
    </location>
</feature>
<feature type="topological domain" description="Cytoplasmic" evidence="12">
    <location>
        <begin position="1"/>
        <end position="22"/>
    </location>
</feature>
<feature type="transmembrane region" description="Helical; Name=1" evidence="4">
    <location>
        <begin position="23"/>
        <end position="43"/>
    </location>
</feature>
<feature type="topological domain" description="Extracellular" evidence="12">
    <location>
        <begin position="44"/>
        <end position="116"/>
    </location>
</feature>
<feature type="transmembrane region" description="Helical; Name=2" evidence="4">
    <location>
        <begin position="117"/>
        <end position="137"/>
    </location>
</feature>
<feature type="topological domain" description="Cytoplasmic" evidence="12">
    <location>
        <begin position="138"/>
        <end position="265"/>
    </location>
</feature>
<feature type="transmembrane region" description="Helical; Name=3" evidence="4">
    <location>
        <begin position="266"/>
        <end position="286"/>
    </location>
</feature>
<feature type="topological domain" description="Extracellular" evidence="12">
    <location>
        <begin position="287"/>
        <end position="313"/>
    </location>
</feature>
<feature type="transmembrane region" description="Helical; Name=4" evidence="4">
    <location>
        <begin position="314"/>
        <end position="334"/>
    </location>
</feature>
<feature type="topological domain" description="Cytoplasmic" evidence="12">
    <location>
        <begin position="335"/>
        <end position="796"/>
    </location>
</feature>
<feature type="repeat" description="LRR 1">
    <location>
        <begin position="508"/>
        <end position="529"/>
    </location>
</feature>
<feature type="repeat" description="LRR 2">
    <location>
        <begin position="536"/>
        <end position="557"/>
    </location>
</feature>
<feature type="repeat" description="LRR 3">
    <location>
        <begin position="559"/>
        <end position="579"/>
    </location>
</feature>
<feature type="repeat" description="LRR 4">
    <location>
        <begin position="583"/>
        <end position="604"/>
    </location>
</feature>
<feature type="repeat" description="LRR 5">
    <location>
        <begin position="606"/>
        <end position="627"/>
    </location>
</feature>
<feature type="repeat" description="LRR 6">
    <location>
        <begin position="631"/>
        <end position="652"/>
    </location>
</feature>
<feature type="repeat" description="LRR 7">
    <location>
        <begin position="654"/>
        <end position="675"/>
    </location>
</feature>
<feature type="repeat" description="LRR 8">
    <location>
        <begin position="677"/>
        <end position="698"/>
    </location>
</feature>
<feature type="repeat" description="LRR 9">
    <location>
        <begin position="700"/>
        <end position="721"/>
    </location>
</feature>
<feature type="repeat" description="LRR 10">
    <location>
        <begin position="723"/>
        <end position="744"/>
    </location>
</feature>
<feature type="repeat" description="LRR 11">
    <location>
        <begin position="746"/>
        <end position="767"/>
    </location>
</feature>
<feature type="glycosylation site" description="N-linked (GlcNAc...) asparagine" evidence="4">
    <location>
        <position position="63"/>
    </location>
</feature>
<feature type="glycosylation site" description="N-linked (GlcNAc...) asparagine" evidence="4">
    <location>
        <position position="302"/>
    </location>
</feature>
<feature type="disulfide bond" evidence="2">
    <location>
        <begin position="54"/>
        <end position="301"/>
    </location>
</feature>
<feature type="sequence variant" id="VAR_060437" description="In dbSNP:rs3745377.">
    <original>P</original>
    <variation>L</variation>
    <location>
        <position position="160"/>
    </location>
</feature>
<feature type="sequence variant" id="VAR_059695" description="In dbSNP:rs2042919.">
    <original>E</original>
    <variation>G</variation>
    <location>
        <position position="181"/>
    </location>
</feature>
<feature type="sequence variant" id="VAR_059696" description="In dbSNP:rs2115108." evidence="5">
    <original>M</original>
    <variation>T</variation>
    <location>
        <position position="190"/>
    </location>
</feature>
<feature type="sequence variant" id="VAR_056930" description="In dbSNP:rs36038711.">
    <original>V</original>
    <variation>I</variation>
    <location>
        <position position="433"/>
    </location>
</feature>
<feature type="mutagenesis site" description="Alters channel anion selectivity." evidence="7">
    <original>T</original>
    <variation>C</variation>
    <location>
        <position position="44"/>
    </location>
</feature>
<feature type="sequence conflict" description="In Ref. 2; BX538180." evidence="12" ref="2">
    <original>L</original>
    <variation>P</variation>
    <location>
        <position position="31"/>
    </location>
</feature>
<feature type="sequence conflict" description="In Ref. 5; AAH70089." evidence="12" ref="5">
    <original>A</original>
    <variation>T</variation>
    <location>
        <position position="115"/>
    </location>
</feature>
<feature type="sequence conflict" description="In Ref. 2; BX538180." evidence="12" ref="2">
    <original>H</original>
    <variation>R</variation>
    <location>
        <position position="244"/>
    </location>
</feature>
<keyword id="KW-1003">Cell membrane</keyword>
<keyword id="KW-1015">Disulfide bond</keyword>
<keyword id="KW-0256">Endoplasmic reticulum</keyword>
<keyword id="KW-0325">Glycoprotein</keyword>
<keyword id="KW-0407">Ion channel</keyword>
<keyword id="KW-0406">Ion transport</keyword>
<keyword id="KW-0433">Leucine-rich repeat</keyword>
<keyword id="KW-0458">Lysosome</keyword>
<keyword id="KW-0472">Membrane</keyword>
<keyword id="KW-1267">Proteomics identification</keyword>
<keyword id="KW-1185">Reference proteome</keyword>
<keyword id="KW-0677">Repeat</keyword>
<keyword id="KW-0812">Transmembrane</keyword>
<keyword id="KW-1133">Transmembrane helix</keyword>
<keyword id="KW-0813">Transport</keyword>
<gene>
    <name evidence="11 14" type="primary">LRRC8E</name>
</gene>
<comment type="function">
    <text evidence="6 7 8 9 10">Non-essential component of the volume-regulated anion channel (VRAC, also named VSOAC channel), an anion channel required to maintain a constant cell volume in response to extracellular or intracellular osmotic changes (PubMed:24790029, PubMed:26824658, PubMed:28193731). The VRAC channel conducts iodide better than chloride and can also conduct organic osmolytes like taurine (PubMed:24790029, PubMed:26824658). Mediates efflux of amino acids, such as aspartate, in response to osmotic stress (PubMed:28193731). The VRAC channel also mediates transport of immunoreactive cyclic dinucleotide GMP-AMP (2'-3'-cGAMP), an immune messenger produced in response to DNA virus in the cytosol (PubMed:33171122). Channel activity requires LRRC8A plus at least one other family member (LRRC8B, LRRC8C, LRRC8D or LRRC8E); channel characteristics depend on the precise subunit composition (PubMed:24790029, PubMed:26824658, PubMed:28193731). Also plays a role in lysosome homeostasis by forming functional lysosomal VRAC channels in response to low cytoplasmic ionic strength condition: lysosomal VRAC channels are necessary for the formation of large lysosome-derived vacuoles, which store and then expel excess water to maintain cytosolic water homeostasis (PubMed:33139539).</text>
</comment>
<comment type="catalytic activity">
    <reaction evidence="13">
        <text>chloride(in) = chloride(out)</text>
        <dbReference type="Rhea" id="RHEA:29823"/>
        <dbReference type="ChEBI" id="CHEBI:17996"/>
    </reaction>
</comment>
<comment type="catalytic activity">
    <reaction evidence="13">
        <text>iodide(out) = iodide(in)</text>
        <dbReference type="Rhea" id="RHEA:66324"/>
        <dbReference type="ChEBI" id="CHEBI:16382"/>
    </reaction>
</comment>
<comment type="catalytic activity">
    <reaction evidence="13">
        <text>taurine(out) = taurine(in)</text>
        <dbReference type="Rhea" id="RHEA:66328"/>
        <dbReference type="ChEBI" id="CHEBI:507393"/>
    </reaction>
</comment>
<comment type="catalytic activity">
    <reaction evidence="10">
        <text>2',3'-cGAMP(out) = 2',3'-cGAMP(in)</text>
        <dbReference type="Rhea" id="RHEA:66320"/>
        <dbReference type="ChEBI" id="CHEBI:143093"/>
    </reaction>
    <physiologicalReaction direction="left-to-right" evidence="10">
        <dbReference type="Rhea" id="RHEA:66321"/>
    </physiologicalReaction>
    <physiologicalReaction direction="right-to-left" evidence="10">
        <dbReference type="Rhea" id="RHEA:66322"/>
    </physiologicalReaction>
</comment>
<comment type="subunit">
    <text evidence="1 6 7 8">Heterohexamer; oligomerizes with other LRRC8 proteins (LRRC8A, LRRC8C, LRRC8D and/or LRRC8B) to form a heterohexamer (PubMed:24790029, PubMed:26824658, PubMed:28193731). In vivo, the subunit composition may depend primarily on expression levels, and heterooligomeric channels containing various proportions of the different LRRC8 proteins may coexist (By similarity).</text>
</comment>
<comment type="interaction">
    <interactant intactId="EBI-8647013">
        <id>Q6NSJ5</id>
    </interactant>
    <interactant intactId="EBI-618655">
        <id>P81274</id>
        <label>GPSM2</label>
    </interactant>
    <organismsDiffer>false</organismsDiffer>
    <experiments>3</experiments>
</comment>
<comment type="interaction">
    <interactant intactId="EBI-8647013">
        <id>Q6NSJ5</id>
    </interactant>
    <interactant intactId="EBI-10970086">
        <id>Q8IWT6</id>
        <label>LRRC8A</label>
    </interactant>
    <organismsDiffer>false</organismsDiffer>
    <experiments>3</experiments>
</comment>
<comment type="interaction">
    <interactant intactId="EBI-8647013">
        <id>Q6NSJ5</id>
    </interactant>
    <interactant intactId="EBI-1047489">
        <id>Q5PRF9</id>
        <label>SAMD4B</label>
    </interactant>
    <organismsDiffer>false</organismsDiffer>
    <experiments>3</experiments>
</comment>
<comment type="interaction">
    <interactant intactId="EBI-8647013">
        <id>Q6NSJ5</id>
    </interactant>
    <interactant intactId="EBI-749840">
        <id>Q9C040</id>
        <label>TRIM2</label>
    </interactant>
    <organismsDiffer>false</organismsDiffer>
    <experiments>7</experiments>
</comment>
<comment type="interaction">
    <interactant intactId="EBI-8647013">
        <id>Q6NSJ5</id>
    </interactant>
    <interactant intactId="EBI-2129889">
        <id>O75382</id>
        <label>TRIM3</label>
    </interactant>
    <organismsDiffer>false</organismsDiffer>
    <experiments>3</experiments>
</comment>
<comment type="subcellular location">
    <subcellularLocation>
        <location evidence="6 7 8">Cell membrane</location>
        <topology evidence="12">Multi-pass membrane protein</topology>
    </subcellularLocation>
    <subcellularLocation>
        <location evidence="13">Endoplasmic reticulum membrane</location>
    </subcellularLocation>
    <subcellularLocation>
        <location evidence="9">Lysosome membrane</location>
        <topology evidence="12">Multi-pass membrane protein</topology>
    </subcellularLocation>
    <subcellularLocation>
        <location evidence="9">Endoplasmic reticulum membrane</location>
        <topology evidence="12">Multi-pass membrane protein</topology>
    </subcellularLocation>
    <text evidence="6 9">In the absence of LRRC8A, resides primarily in the endoplasmic reticulum (PubMed:24790029, PubMed:33139539). Requires LRRC8A for localization at the cell membrane or lysosome membrane (PubMed:24790029, PubMed:33139539).</text>
</comment>
<comment type="domain">
    <text evidence="3">The volume-regulated anion channel (VRAC) channel forms a trimer of dimers, with symmetry mismatch between the pore-forming domain and the cytosolic LRR repeats, a topology similar to gap junction proteins.</text>
</comment>
<comment type="similarity">
    <text evidence="12">Belongs to the LRRC8 family.</text>
</comment>
<comment type="sequence caution" evidence="12">
    <conflict type="erroneous initiation">
        <sequence resource="EMBL-CDS" id="BAB15648"/>
    </conflict>
    <text>Truncated N-terminus.</text>
</comment>
<comment type="sequence caution" evidence="12">
    <conflict type="miscellaneous discrepancy">
        <sequence resource="EMBL-CDS" id="BAB15648"/>
    </conflict>
    <text>Contaminating sequence.</text>
</comment>
<accession>Q6NSJ5</accession>
<accession>B3KR78</accession>
<accession>Q2YDY3</accession>
<accession>Q7L236</accession>
<accession>Q8N3B0</accession>
<accession>Q9H5H8</accession>
<proteinExistence type="evidence at protein level"/>
<dbReference type="EMBL" id="AK027073">
    <property type="protein sequence ID" value="BAB15648.1"/>
    <property type="status" value="ALT_SEQ"/>
    <property type="molecule type" value="mRNA"/>
</dbReference>
<dbReference type="EMBL" id="AK091134">
    <property type="protein sequence ID" value="BAG52290.1"/>
    <property type="molecule type" value="mRNA"/>
</dbReference>
<dbReference type="EMBL" id="AL834474">
    <property type="protein sequence ID" value="CAD39133.1"/>
    <property type="molecule type" value="mRNA"/>
</dbReference>
<dbReference type="EMBL" id="BX538180">
    <property type="status" value="NOT_ANNOTATED_CDS"/>
    <property type="molecule type" value="mRNA"/>
</dbReference>
<dbReference type="EMBL" id="AC010336">
    <property type="status" value="NOT_ANNOTATED_CDS"/>
    <property type="molecule type" value="Genomic_DNA"/>
</dbReference>
<dbReference type="EMBL" id="CH471139">
    <property type="protein sequence ID" value="EAW68969.1"/>
    <property type="molecule type" value="Genomic_DNA"/>
</dbReference>
<dbReference type="EMBL" id="BC022216">
    <property type="protein sequence ID" value="AAH22216.2"/>
    <property type="molecule type" value="mRNA"/>
</dbReference>
<dbReference type="EMBL" id="BC070089">
    <property type="protein sequence ID" value="AAH70089.1"/>
    <property type="molecule type" value="mRNA"/>
</dbReference>
<dbReference type="EMBL" id="BC108252">
    <property type="protein sequence ID" value="AAI08253.1"/>
    <property type="molecule type" value="mRNA"/>
</dbReference>
<dbReference type="CCDS" id="CCDS12189.1"/>
<dbReference type="RefSeq" id="NP_001255213.1">
    <property type="nucleotide sequence ID" value="NM_001268284.3"/>
</dbReference>
<dbReference type="RefSeq" id="NP_001255214.1">
    <property type="nucleotide sequence ID" value="NM_001268285.2"/>
</dbReference>
<dbReference type="RefSeq" id="NP_079337.2">
    <property type="nucleotide sequence ID" value="NM_025061.5"/>
</dbReference>
<dbReference type="RefSeq" id="XP_011526621.1">
    <property type="nucleotide sequence ID" value="XM_011528319.3"/>
</dbReference>
<dbReference type="RefSeq" id="XP_047295417.1">
    <property type="nucleotide sequence ID" value="XM_047439461.1"/>
</dbReference>
<dbReference type="RefSeq" id="XP_054178192.1">
    <property type="nucleotide sequence ID" value="XM_054322217.1"/>
</dbReference>
<dbReference type="RefSeq" id="XP_054178193.1">
    <property type="nucleotide sequence ID" value="XM_054322218.1"/>
</dbReference>
<dbReference type="SMR" id="Q6NSJ5"/>
<dbReference type="BioGRID" id="123131">
    <property type="interactions" value="122"/>
</dbReference>
<dbReference type="CORUM" id="Q6NSJ5"/>
<dbReference type="DIP" id="DIP-61363N"/>
<dbReference type="FunCoup" id="Q6NSJ5">
    <property type="interactions" value="340"/>
</dbReference>
<dbReference type="IntAct" id="Q6NSJ5">
    <property type="interactions" value="91"/>
</dbReference>
<dbReference type="MINT" id="Q6NSJ5"/>
<dbReference type="STRING" id="9606.ENSP00000479953"/>
<dbReference type="TCDB" id="1.A.25.3.1">
    <property type="family name" value="the gap junction-forming innexin (innexin) family"/>
</dbReference>
<dbReference type="GlyCosmos" id="Q6NSJ5">
    <property type="glycosylation" value="2 sites, No reported glycans"/>
</dbReference>
<dbReference type="GlyGen" id="Q6NSJ5">
    <property type="glycosylation" value="2 sites, 1 N-linked glycan (1 site)"/>
</dbReference>
<dbReference type="iPTMnet" id="Q6NSJ5"/>
<dbReference type="PhosphoSitePlus" id="Q6NSJ5"/>
<dbReference type="SwissPalm" id="Q6NSJ5"/>
<dbReference type="BioMuta" id="LRRC8E"/>
<dbReference type="DMDM" id="296434573"/>
<dbReference type="jPOST" id="Q6NSJ5"/>
<dbReference type="MassIVE" id="Q6NSJ5"/>
<dbReference type="PaxDb" id="9606-ENSP00000479953"/>
<dbReference type="PeptideAtlas" id="Q6NSJ5"/>
<dbReference type="ProteomicsDB" id="66639"/>
<dbReference type="Pumba" id="Q6NSJ5"/>
<dbReference type="Antibodypedia" id="12282">
    <property type="antibodies" value="54 antibodies from 14 providers"/>
</dbReference>
<dbReference type="DNASU" id="80131"/>
<dbReference type="Ensembl" id="ENST00000306708.11">
    <property type="protein sequence ID" value="ENSP00000306524.5"/>
    <property type="gene ID" value="ENSG00000171017.11"/>
</dbReference>
<dbReference type="Ensembl" id="ENST00000618098.4">
    <property type="protein sequence ID" value="ENSP00000479953.1"/>
    <property type="gene ID" value="ENSG00000171017.11"/>
</dbReference>
<dbReference type="GeneID" id="80131"/>
<dbReference type="KEGG" id="hsa:80131"/>
<dbReference type="MANE-Select" id="ENST00000306708.11">
    <property type="protein sequence ID" value="ENSP00000306524.5"/>
    <property type="RefSeq nucleotide sequence ID" value="NM_025061.6"/>
    <property type="RefSeq protein sequence ID" value="NP_079337.2"/>
</dbReference>
<dbReference type="UCSC" id="uc002mir.4">
    <property type="organism name" value="human"/>
</dbReference>
<dbReference type="AGR" id="HGNC:26272"/>
<dbReference type="CTD" id="80131"/>
<dbReference type="DisGeNET" id="80131"/>
<dbReference type="GeneCards" id="LRRC8E"/>
<dbReference type="HGNC" id="HGNC:26272">
    <property type="gene designation" value="LRRC8E"/>
</dbReference>
<dbReference type="HPA" id="ENSG00000171017">
    <property type="expression patterns" value="Low tissue specificity"/>
</dbReference>
<dbReference type="MalaCards" id="LRRC8E"/>
<dbReference type="MIM" id="612891">
    <property type="type" value="gene"/>
</dbReference>
<dbReference type="neXtProt" id="NX_Q6NSJ5"/>
<dbReference type="OpenTargets" id="ENSG00000171017"/>
<dbReference type="PharmGKB" id="PA142671537"/>
<dbReference type="VEuPathDB" id="HostDB:ENSG00000171017"/>
<dbReference type="eggNOG" id="KOG0619">
    <property type="taxonomic scope" value="Eukaryota"/>
</dbReference>
<dbReference type="GeneTree" id="ENSGT00940000159311"/>
<dbReference type="HOGENOM" id="CLU_019019_0_0_1"/>
<dbReference type="InParanoid" id="Q6NSJ5"/>
<dbReference type="OMA" id="MNDIPDV"/>
<dbReference type="OrthoDB" id="2021138at2759"/>
<dbReference type="PAN-GO" id="Q6NSJ5">
    <property type="GO annotations" value="0 GO annotations based on evolutionary models"/>
</dbReference>
<dbReference type="PhylomeDB" id="Q6NSJ5"/>
<dbReference type="TreeFam" id="TF331443"/>
<dbReference type="PathwayCommons" id="Q6NSJ5"/>
<dbReference type="Reactome" id="R-HSA-5223345">
    <property type="pathway name" value="Miscellaneous transport and binding events"/>
</dbReference>
<dbReference type="SignaLink" id="Q6NSJ5"/>
<dbReference type="BioGRID-ORCS" id="80131">
    <property type="hits" value="10 hits in 1148 CRISPR screens"/>
</dbReference>
<dbReference type="ChiTaRS" id="LRRC8E">
    <property type="organism name" value="human"/>
</dbReference>
<dbReference type="GeneWiki" id="LRRC8E"/>
<dbReference type="GenomeRNAi" id="80131"/>
<dbReference type="Pharos" id="Q6NSJ5">
    <property type="development level" value="Tbio"/>
</dbReference>
<dbReference type="PRO" id="PR:Q6NSJ5"/>
<dbReference type="Proteomes" id="UP000005640">
    <property type="component" value="Chromosome 19"/>
</dbReference>
<dbReference type="RNAct" id="Q6NSJ5">
    <property type="molecule type" value="protein"/>
</dbReference>
<dbReference type="Bgee" id="ENSG00000171017">
    <property type="expression patterns" value="Expressed in secondary oocyte and 129 other cell types or tissues"/>
</dbReference>
<dbReference type="ExpressionAtlas" id="Q6NSJ5">
    <property type="expression patterns" value="baseline and differential"/>
</dbReference>
<dbReference type="GO" id="GO:0005737">
    <property type="term" value="C:cytoplasm"/>
    <property type="evidence" value="ECO:0000314"/>
    <property type="project" value="UniProtKB"/>
</dbReference>
<dbReference type="GO" id="GO:0005789">
    <property type="term" value="C:endoplasmic reticulum membrane"/>
    <property type="evidence" value="ECO:0000314"/>
    <property type="project" value="UniProtKB"/>
</dbReference>
<dbReference type="GO" id="GO:0005765">
    <property type="term" value="C:lysosomal membrane"/>
    <property type="evidence" value="ECO:0000314"/>
    <property type="project" value="UniProtKB"/>
</dbReference>
<dbReference type="GO" id="GO:0034702">
    <property type="term" value="C:monoatomic ion channel complex"/>
    <property type="evidence" value="ECO:0000315"/>
    <property type="project" value="UniProtKB"/>
</dbReference>
<dbReference type="GO" id="GO:0005886">
    <property type="term" value="C:plasma membrane"/>
    <property type="evidence" value="ECO:0000314"/>
    <property type="project" value="UniProtKB"/>
</dbReference>
<dbReference type="GO" id="GO:0005225">
    <property type="term" value="F:volume-sensitive anion channel activity"/>
    <property type="evidence" value="ECO:0000314"/>
    <property type="project" value="UniProtKB"/>
</dbReference>
<dbReference type="GO" id="GO:0015810">
    <property type="term" value="P:aspartate transmembrane transport"/>
    <property type="evidence" value="ECO:0000315"/>
    <property type="project" value="UniProtKB"/>
</dbReference>
<dbReference type="GO" id="GO:0006884">
    <property type="term" value="P:cell volume homeostasis"/>
    <property type="evidence" value="ECO:0000314"/>
    <property type="project" value="UniProtKB"/>
</dbReference>
<dbReference type="GO" id="GO:0071470">
    <property type="term" value="P:cellular response to osmotic stress"/>
    <property type="evidence" value="ECO:0000315"/>
    <property type="project" value="UniProtKB"/>
</dbReference>
<dbReference type="GO" id="GO:0140361">
    <property type="term" value="P:cyclic-GMP-AMP transmembrane import across plasma membrane"/>
    <property type="evidence" value="ECO:0000314"/>
    <property type="project" value="UniProtKB"/>
</dbReference>
<dbReference type="GO" id="GO:0035556">
    <property type="term" value="P:intracellular signal transduction"/>
    <property type="evidence" value="ECO:0000318"/>
    <property type="project" value="GO_Central"/>
</dbReference>
<dbReference type="GO" id="GO:0098656">
    <property type="term" value="P:monoatomic anion transmembrane transport"/>
    <property type="evidence" value="ECO:0000315"/>
    <property type="project" value="UniProtKB"/>
</dbReference>
<dbReference type="FunFam" id="3.80.10.10:FF:000747">
    <property type="entry name" value="volume-regulated anion channel subunit LRRC8E"/>
    <property type="match status" value="1"/>
</dbReference>
<dbReference type="FunFam" id="3.80.10.10:FF:001071">
    <property type="entry name" value="volume-regulated anion channel subunit LRRC8E"/>
    <property type="match status" value="1"/>
</dbReference>
<dbReference type="FunFam" id="3.80.10.10:FF:000907">
    <property type="entry name" value="Volume-regulated anion channel subunit LRRC8E isoform X1"/>
    <property type="match status" value="1"/>
</dbReference>
<dbReference type="Gene3D" id="3.80.10.10">
    <property type="entry name" value="Ribonuclease Inhibitor"/>
    <property type="match status" value="2"/>
</dbReference>
<dbReference type="InterPro" id="IPR001611">
    <property type="entry name" value="Leu-rich_rpt"/>
</dbReference>
<dbReference type="InterPro" id="IPR003591">
    <property type="entry name" value="Leu-rich_rpt_typical-subtyp"/>
</dbReference>
<dbReference type="InterPro" id="IPR032675">
    <property type="entry name" value="LRR_dom_sf"/>
</dbReference>
<dbReference type="InterPro" id="IPR050216">
    <property type="entry name" value="LRR_domain-containing"/>
</dbReference>
<dbReference type="InterPro" id="IPR021040">
    <property type="entry name" value="LRRC8_Pannexin-like"/>
</dbReference>
<dbReference type="PANTHER" id="PTHR48051">
    <property type="match status" value="1"/>
</dbReference>
<dbReference type="PANTHER" id="PTHR48051:SF1">
    <property type="entry name" value="RAS SUPPRESSOR PROTEIN 1"/>
    <property type="match status" value="1"/>
</dbReference>
<dbReference type="Pfam" id="PF00560">
    <property type="entry name" value="LRR_1"/>
    <property type="match status" value="1"/>
</dbReference>
<dbReference type="Pfam" id="PF13855">
    <property type="entry name" value="LRR_8"/>
    <property type="match status" value="2"/>
</dbReference>
<dbReference type="Pfam" id="PF12534">
    <property type="entry name" value="Pannexin_like"/>
    <property type="match status" value="1"/>
</dbReference>
<dbReference type="SMART" id="SM00369">
    <property type="entry name" value="LRR_TYP"/>
    <property type="match status" value="7"/>
</dbReference>
<dbReference type="SUPFAM" id="SSF52058">
    <property type="entry name" value="L domain-like"/>
    <property type="match status" value="1"/>
</dbReference>
<dbReference type="PROSITE" id="PS51450">
    <property type="entry name" value="LRR"/>
    <property type="match status" value="8"/>
</dbReference>
<evidence type="ECO:0000250" key="1">
    <source>
        <dbReference type="UniProtKB" id="Q66JT1"/>
    </source>
</evidence>
<evidence type="ECO:0000250" key="2">
    <source>
        <dbReference type="UniProtKB" id="Q80WG5"/>
    </source>
</evidence>
<evidence type="ECO:0000250" key="3">
    <source>
        <dbReference type="UniProtKB" id="Q8IWT6"/>
    </source>
</evidence>
<evidence type="ECO:0000255" key="4"/>
<evidence type="ECO:0000269" key="5">
    <source>
    </source>
</evidence>
<evidence type="ECO:0000269" key="6">
    <source>
    </source>
</evidence>
<evidence type="ECO:0000269" key="7">
    <source>
    </source>
</evidence>
<evidence type="ECO:0000269" key="8">
    <source>
    </source>
</evidence>
<evidence type="ECO:0000269" key="9">
    <source>
    </source>
</evidence>
<evidence type="ECO:0000269" key="10">
    <source>
    </source>
</evidence>
<evidence type="ECO:0000303" key="11">
    <source>
    </source>
</evidence>
<evidence type="ECO:0000305" key="12"/>
<evidence type="ECO:0000305" key="13">
    <source>
    </source>
</evidence>
<evidence type="ECO:0000312" key="14">
    <source>
        <dbReference type="HGNC" id="HGNC:26272"/>
    </source>
</evidence>
<protein>
    <recommendedName>
        <fullName evidence="1">Volume-regulated anion channel subunit LRRC8E</fullName>
    </recommendedName>
    <alternativeName>
        <fullName evidence="11">Leucine-rich repeat-containing protein 8E</fullName>
    </alternativeName>
</protein>